<accession>Q8XKG4</accession>
<sequence>MELIIATRKSKLAQVQTEKVMELLKGKENVDSKKLLVMTEGDRRLDVSLNKIGGKGLFVKEIELALLNKEAHGAVHSMKDVPFELPSEFELVAMPEREDIRDAFVSLNGSTLSNLRKGARIGTSSIRRAEQLKLFRDDLEIVPIRGNVQTRIKKITEENLDGIILAAAGLKRLGMEDVISDYFDPKVFLPAIGQGALGIECLKGGEFNDYFKALDSKEVRTTVEAERSFMKVLNGGCHSLIGAYSEVKDNDLYMIGTFTVNNRIVKKDILGNKEDNILLGKKLAEKILEEV</sequence>
<organism>
    <name type="scientific">Clostridium perfringens (strain 13 / Type A)</name>
    <dbReference type="NCBI Taxonomy" id="195102"/>
    <lineage>
        <taxon>Bacteria</taxon>
        <taxon>Bacillati</taxon>
        <taxon>Bacillota</taxon>
        <taxon>Clostridia</taxon>
        <taxon>Eubacteriales</taxon>
        <taxon>Clostridiaceae</taxon>
        <taxon>Clostridium</taxon>
    </lineage>
</organism>
<dbReference type="EC" id="2.5.1.61" evidence="1"/>
<dbReference type="EMBL" id="BA000016">
    <property type="protein sequence ID" value="BAB81141.1"/>
    <property type="molecule type" value="Genomic_DNA"/>
</dbReference>
<dbReference type="RefSeq" id="WP_004459351.1">
    <property type="nucleotide sequence ID" value="NC_003366.1"/>
</dbReference>
<dbReference type="SMR" id="Q8XKG4"/>
<dbReference type="STRING" id="195102.gene:10490699"/>
<dbReference type="KEGG" id="cpe:CPE1435"/>
<dbReference type="HOGENOM" id="CLU_019704_0_2_9"/>
<dbReference type="UniPathway" id="UPA00251">
    <property type="reaction ID" value="UER00319"/>
</dbReference>
<dbReference type="Proteomes" id="UP000000818">
    <property type="component" value="Chromosome"/>
</dbReference>
<dbReference type="GO" id="GO:0005737">
    <property type="term" value="C:cytoplasm"/>
    <property type="evidence" value="ECO:0007669"/>
    <property type="project" value="TreeGrafter"/>
</dbReference>
<dbReference type="GO" id="GO:0004418">
    <property type="term" value="F:hydroxymethylbilane synthase activity"/>
    <property type="evidence" value="ECO:0007669"/>
    <property type="project" value="UniProtKB-UniRule"/>
</dbReference>
<dbReference type="GO" id="GO:0006782">
    <property type="term" value="P:protoporphyrinogen IX biosynthetic process"/>
    <property type="evidence" value="ECO:0007669"/>
    <property type="project" value="UniProtKB-UniRule"/>
</dbReference>
<dbReference type="CDD" id="cd13647">
    <property type="entry name" value="PBP2_PBGD_2"/>
    <property type="match status" value="1"/>
</dbReference>
<dbReference type="FunFam" id="3.40.190.10:FF:000005">
    <property type="entry name" value="Porphobilinogen deaminase"/>
    <property type="match status" value="1"/>
</dbReference>
<dbReference type="Gene3D" id="3.40.190.10">
    <property type="entry name" value="Periplasmic binding protein-like II"/>
    <property type="match status" value="2"/>
</dbReference>
<dbReference type="Gene3D" id="3.30.160.40">
    <property type="entry name" value="Porphobilinogen deaminase, C-terminal domain"/>
    <property type="match status" value="1"/>
</dbReference>
<dbReference type="HAMAP" id="MF_00260">
    <property type="entry name" value="Porphobil_deam"/>
    <property type="match status" value="1"/>
</dbReference>
<dbReference type="InterPro" id="IPR000860">
    <property type="entry name" value="HemC"/>
</dbReference>
<dbReference type="InterPro" id="IPR022419">
    <property type="entry name" value="Porphobilin_deaminase_cofac_BS"/>
</dbReference>
<dbReference type="InterPro" id="IPR022417">
    <property type="entry name" value="Porphobilin_deaminase_N"/>
</dbReference>
<dbReference type="InterPro" id="IPR022418">
    <property type="entry name" value="Porphobilinogen_deaminase_C"/>
</dbReference>
<dbReference type="InterPro" id="IPR036803">
    <property type="entry name" value="Porphobilinogen_deaminase_C_sf"/>
</dbReference>
<dbReference type="NCBIfam" id="TIGR00212">
    <property type="entry name" value="hemC"/>
    <property type="match status" value="1"/>
</dbReference>
<dbReference type="PANTHER" id="PTHR11557">
    <property type="entry name" value="PORPHOBILINOGEN DEAMINASE"/>
    <property type="match status" value="1"/>
</dbReference>
<dbReference type="PANTHER" id="PTHR11557:SF0">
    <property type="entry name" value="PORPHOBILINOGEN DEAMINASE"/>
    <property type="match status" value="1"/>
</dbReference>
<dbReference type="Pfam" id="PF01379">
    <property type="entry name" value="Porphobil_deam"/>
    <property type="match status" value="1"/>
</dbReference>
<dbReference type="Pfam" id="PF03900">
    <property type="entry name" value="Porphobil_deamC"/>
    <property type="match status" value="1"/>
</dbReference>
<dbReference type="PIRSF" id="PIRSF001438">
    <property type="entry name" value="4pyrrol_synth_OHMeBilane_synth"/>
    <property type="match status" value="1"/>
</dbReference>
<dbReference type="PRINTS" id="PR00151">
    <property type="entry name" value="PORPHBDMNASE"/>
</dbReference>
<dbReference type="SUPFAM" id="SSF53850">
    <property type="entry name" value="Periplasmic binding protein-like II"/>
    <property type="match status" value="1"/>
</dbReference>
<dbReference type="SUPFAM" id="SSF54782">
    <property type="entry name" value="Porphobilinogen deaminase (hydroxymethylbilane synthase), C-terminal domain"/>
    <property type="match status" value="1"/>
</dbReference>
<dbReference type="PROSITE" id="PS00533">
    <property type="entry name" value="PORPHOBILINOGEN_DEAM"/>
    <property type="match status" value="1"/>
</dbReference>
<evidence type="ECO:0000255" key="1">
    <source>
        <dbReference type="HAMAP-Rule" id="MF_00260"/>
    </source>
</evidence>
<protein>
    <recommendedName>
        <fullName evidence="1">Porphobilinogen deaminase</fullName>
        <shortName evidence="1">PBG</shortName>
        <ecNumber evidence="1">2.5.1.61</ecNumber>
    </recommendedName>
    <alternativeName>
        <fullName evidence="1">Hydroxymethylbilane synthase</fullName>
        <shortName evidence="1">HMBS</shortName>
    </alternativeName>
    <alternativeName>
        <fullName evidence="1">Pre-uroporphyrinogen synthase</fullName>
    </alternativeName>
</protein>
<proteinExistence type="inferred from homology"/>
<gene>
    <name evidence="1" type="primary">hemC</name>
    <name type="synonym">hemD</name>
    <name type="ordered locus">CPE1435</name>
</gene>
<reference key="1">
    <citation type="journal article" date="2002" name="Proc. Natl. Acad. Sci. U.S.A.">
        <title>Complete genome sequence of Clostridium perfringens, an anaerobic flesh-eater.</title>
        <authorList>
            <person name="Shimizu T."/>
            <person name="Ohtani K."/>
            <person name="Hirakawa H."/>
            <person name="Ohshima K."/>
            <person name="Yamashita A."/>
            <person name="Shiba T."/>
            <person name="Ogasawara N."/>
            <person name="Hattori M."/>
            <person name="Kuhara S."/>
            <person name="Hayashi H."/>
        </authorList>
    </citation>
    <scope>NUCLEOTIDE SEQUENCE [LARGE SCALE GENOMIC DNA]</scope>
    <source>
        <strain>13 / Type A</strain>
    </source>
</reference>
<feature type="chain" id="PRO_0000142927" description="Porphobilinogen deaminase">
    <location>
        <begin position="1"/>
        <end position="291"/>
    </location>
</feature>
<feature type="modified residue" description="S-(dipyrrolylmethanemethyl)cysteine" evidence="1">
    <location>
        <position position="237"/>
    </location>
</feature>
<comment type="function">
    <text evidence="1">Tetrapolymerization of the monopyrrole PBG into the hydroxymethylbilane pre-uroporphyrinogen in several discrete steps.</text>
</comment>
<comment type="catalytic activity">
    <reaction evidence="1">
        <text>4 porphobilinogen + H2O = hydroxymethylbilane + 4 NH4(+)</text>
        <dbReference type="Rhea" id="RHEA:13185"/>
        <dbReference type="ChEBI" id="CHEBI:15377"/>
        <dbReference type="ChEBI" id="CHEBI:28938"/>
        <dbReference type="ChEBI" id="CHEBI:57845"/>
        <dbReference type="ChEBI" id="CHEBI:58126"/>
        <dbReference type="EC" id="2.5.1.61"/>
    </reaction>
</comment>
<comment type="cofactor">
    <cofactor evidence="1">
        <name>dipyrromethane</name>
        <dbReference type="ChEBI" id="CHEBI:60342"/>
    </cofactor>
    <text evidence="1">Binds 1 dipyrromethane group covalently.</text>
</comment>
<comment type="pathway">
    <text evidence="1">Porphyrin-containing compound metabolism; protoporphyrin-IX biosynthesis; coproporphyrinogen-III from 5-aminolevulinate: step 2/4.</text>
</comment>
<comment type="subunit">
    <text evidence="1">Monomer.</text>
</comment>
<comment type="miscellaneous">
    <text evidence="1">The porphobilinogen subunits are added to the dipyrromethane group.</text>
</comment>
<comment type="similarity">
    <text evidence="1">Belongs to the HMBS family.</text>
</comment>
<name>HEM3_CLOPE</name>
<keyword id="KW-0627">Porphyrin biosynthesis</keyword>
<keyword id="KW-1185">Reference proteome</keyword>
<keyword id="KW-0808">Transferase</keyword>